<dbReference type="EMBL" id="CP000076">
    <property type="protein sequence ID" value="AAY91388.1"/>
    <property type="molecule type" value="Genomic_DNA"/>
</dbReference>
<dbReference type="RefSeq" id="WP_002553160.1">
    <property type="nucleotide sequence ID" value="NC_004129.6"/>
</dbReference>
<dbReference type="SMR" id="Q4KEW2"/>
<dbReference type="STRING" id="220664.PFL_2113"/>
<dbReference type="GeneID" id="98112259"/>
<dbReference type="KEGG" id="pfl:PFL_2113"/>
<dbReference type="eggNOG" id="COG0291">
    <property type="taxonomic scope" value="Bacteria"/>
</dbReference>
<dbReference type="HOGENOM" id="CLU_169643_1_1_6"/>
<dbReference type="Proteomes" id="UP000008540">
    <property type="component" value="Chromosome"/>
</dbReference>
<dbReference type="GO" id="GO:0022625">
    <property type="term" value="C:cytosolic large ribosomal subunit"/>
    <property type="evidence" value="ECO:0007669"/>
    <property type="project" value="TreeGrafter"/>
</dbReference>
<dbReference type="GO" id="GO:0003735">
    <property type="term" value="F:structural constituent of ribosome"/>
    <property type="evidence" value="ECO:0007669"/>
    <property type="project" value="InterPro"/>
</dbReference>
<dbReference type="GO" id="GO:0006412">
    <property type="term" value="P:translation"/>
    <property type="evidence" value="ECO:0007669"/>
    <property type="project" value="UniProtKB-UniRule"/>
</dbReference>
<dbReference type="FunFam" id="4.10.410.60:FF:000001">
    <property type="entry name" value="50S ribosomal protein L35"/>
    <property type="match status" value="1"/>
</dbReference>
<dbReference type="Gene3D" id="4.10.410.60">
    <property type="match status" value="1"/>
</dbReference>
<dbReference type="HAMAP" id="MF_00514">
    <property type="entry name" value="Ribosomal_bL35"/>
    <property type="match status" value="1"/>
</dbReference>
<dbReference type="InterPro" id="IPR001706">
    <property type="entry name" value="Ribosomal_bL35"/>
</dbReference>
<dbReference type="InterPro" id="IPR021137">
    <property type="entry name" value="Ribosomal_bL35-like"/>
</dbReference>
<dbReference type="InterPro" id="IPR018265">
    <property type="entry name" value="Ribosomal_bL35_CS"/>
</dbReference>
<dbReference type="InterPro" id="IPR037229">
    <property type="entry name" value="Ribosomal_bL35_sf"/>
</dbReference>
<dbReference type="NCBIfam" id="TIGR00001">
    <property type="entry name" value="rpmI_bact"/>
    <property type="match status" value="1"/>
</dbReference>
<dbReference type="PANTHER" id="PTHR33343">
    <property type="entry name" value="54S RIBOSOMAL PROTEIN BL35M"/>
    <property type="match status" value="1"/>
</dbReference>
<dbReference type="PANTHER" id="PTHR33343:SF1">
    <property type="entry name" value="LARGE RIBOSOMAL SUBUNIT PROTEIN BL35M"/>
    <property type="match status" value="1"/>
</dbReference>
<dbReference type="Pfam" id="PF01632">
    <property type="entry name" value="Ribosomal_L35p"/>
    <property type="match status" value="1"/>
</dbReference>
<dbReference type="PRINTS" id="PR00064">
    <property type="entry name" value="RIBOSOMALL35"/>
</dbReference>
<dbReference type="SUPFAM" id="SSF143034">
    <property type="entry name" value="L35p-like"/>
    <property type="match status" value="1"/>
</dbReference>
<dbReference type="PROSITE" id="PS00936">
    <property type="entry name" value="RIBOSOMAL_L35"/>
    <property type="match status" value="1"/>
</dbReference>
<proteinExistence type="inferred from homology"/>
<name>RL35_PSEF5</name>
<keyword id="KW-0687">Ribonucleoprotein</keyword>
<keyword id="KW-0689">Ribosomal protein</keyword>
<organism>
    <name type="scientific">Pseudomonas fluorescens (strain ATCC BAA-477 / NRRL B-23932 / Pf-5)</name>
    <dbReference type="NCBI Taxonomy" id="220664"/>
    <lineage>
        <taxon>Bacteria</taxon>
        <taxon>Pseudomonadati</taxon>
        <taxon>Pseudomonadota</taxon>
        <taxon>Gammaproteobacteria</taxon>
        <taxon>Pseudomonadales</taxon>
        <taxon>Pseudomonadaceae</taxon>
        <taxon>Pseudomonas</taxon>
    </lineage>
</organism>
<feature type="chain" id="PRO_0000258726" description="Large ribosomal subunit protein bL35">
    <location>
        <begin position="1"/>
        <end position="64"/>
    </location>
</feature>
<evidence type="ECO:0000255" key="1">
    <source>
        <dbReference type="HAMAP-Rule" id="MF_00514"/>
    </source>
</evidence>
<evidence type="ECO:0000305" key="2"/>
<sequence>MPKMKTKSGAAKRFLKTANGIKHKHAFKSHILTKMSTKRKRQLRGSSLLHPSDVAKVERMLRLR</sequence>
<gene>
    <name evidence="1" type="primary">rpmI</name>
    <name type="ordered locus">PFL_2113</name>
</gene>
<accession>Q4KEW2</accession>
<comment type="similarity">
    <text evidence="1">Belongs to the bacterial ribosomal protein bL35 family.</text>
</comment>
<reference key="1">
    <citation type="journal article" date="2005" name="Nat. Biotechnol.">
        <title>Complete genome sequence of the plant commensal Pseudomonas fluorescens Pf-5.</title>
        <authorList>
            <person name="Paulsen I.T."/>
            <person name="Press C.M."/>
            <person name="Ravel J."/>
            <person name="Kobayashi D.Y."/>
            <person name="Myers G.S.A."/>
            <person name="Mavrodi D.V."/>
            <person name="DeBoy R.T."/>
            <person name="Seshadri R."/>
            <person name="Ren Q."/>
            <person name="Madupu R."/>
            <person name="Dodson R.J."/>
            <person name="Durkin A.S."/>
            <person name="Brinkac L.M."/>
            <person name="Daugherty S.C."/>
            <person name="Sullivan S.A."/>
            <person name="Rosovitz M.J."/>
            <person name="Gwinn M.L."/>
            <person name="Zhou L."/>
            <person name="Schneider D.J."/>
            <person name="Cartinhour S.W."/>
            <person name="Nelson W.C."/>
            <person name="Weidman J."/>
            <person name="Watkins K."/>
            <person name="Tran K."/>
            <person name="Khouri H."/>
            <person name="Pierson E.A."/>
            <person name="Pierson L.S. III"/>
            <person name="Thomashow L.S."/>
            <person name="Loper J.E."/>
        </authorList>
    </citation>
    <scope>NUCLEOTIDE SEQUENCE [LARGE SCALE GENOMIC DNA]</scope>
    <source>
        <strain>ATCC BAA-477 / NRRL B-23932 / Pf-5</strain>
    </source>
</reference>
<protein>
    <recommendedName>
        <fullName evidence="1">Large ribosomal subunit protein bL35</fullName>
    </recommendedName>
    <alternativeName>
        <fullName evidence="2">50S ribosomal protein L35</fullName>
    </alternativeName>
</protein>